<sequence>MQLNVNDAQAIEVSELTFGGEFNETLVHQAVVAYMAGGRQGTKQQKTRSDVAGGGKRPWRQKGTGRARAGTTRGPIWRGGGVTFAARPQDHSQKLNKKMYRAALRSILAELVRSDRLVVVQDFAVEAPKTKDLLNKLNGMGLSDVLIVSDAVDQNLYLAARNLPHVDVRDVQGSDPVSLIAYEKVLITVSAVKKFEELLG</sequence>
<keyword id="KW-0687">Ribonucleoprotein</keyword>
<keyword id="KW-0689">Ribosomal protein</keyword>
<keyword id="KW-0694">RNA-binding</keyword>
<keyword id="KW-0699">rRNA-binding</keyword>
<name>RL4_PSEP1</name>
<reference key="1">
    <citation type="submission" date="2007-05" db="EMBL/GenBank/DDBJ databases">
        <title>Complete sequence of Pseudomonas putida F1.</title>
        <authorList>
            <consortium name="US DOE Joint Genome Institute"/>
            <person name="Copeland A."/>
            <person name="Lucas S."/>
            <person name="Lapidus A."/>
            <person name="Barry K."/>
            <person name="Detter J.C."/>
            <person name="Glavina del Rio T."/>
            <person name="Hammon N."/>
            <person name="Israni S."/>
            <person name="Dalin E."/>
            <person name="Tice H."/>
            <person name="Pitluck S."/>
            <person name="Chain P."/>
            <person name="Malfatti S."/>
            <person name="Shin M."/>
            <person name="Vergez L."/>
            <person name="Schmutz J."/>
            <person name="Larimer F."/>
            <person name="Land M."/>
            <person name="Hauser L."/>
            <person name="Kyrpides N."/>
            <person name="Lykidis A."/>
            <person name="Parales R."/>
            <person name="Richardson P."/>
        </authorList>
    </citation>
    <scope>NUCLEOTIDE SEQUENCE [LARGE SCALE GENOMIC DNA]</scope>
    <source>
        <strain>ATCC 700007 / DSM 6899 / JCM 31910 / BCRC 17059 / LMG 24140 / F1</strain>
    </source>
</reference>
<comment type="function">
    <text evidence="1">One of the primary rRNA binding proteins, this protein initially binds near the 5'-end of the 23S rRNA. It is important during the early stages of 50S assembly. It makes multiple contacts with different domains of the 23S rRNA in the assembled 50S subunit and ribosome.</text>
</comment>
<comment type="function">
    <text evidence="1">Forms part of the polypeptide exit tunnel.</text>
</comment>
<comment type="subunit">
    <text evidence="1">Part of the 50S ribosomal subunit.</text>
</comment>
<comment type="similarity">
    <text evidence="1">Belongs to the universal ribosomal protein uL4 family.</text>
</comment>
<evidence type="ECO:0000255" key="1">
    <source>
        <dbReference type="HAMAP-Rule" id="MF_01328"/>
    </source>
</evidence>
<evidence type="ECO:0000256" key="2">
    <source>
        <dbReference type="SAM" id="MobiDB-lite"/>
    </source>
</evidence>
<evidence type="ECO:0000305" key="3"/>
<protein>
    <recommendedName>
        <fullName evidence="1">Large ribosomal subunit protein uL4</fullName>
    </recommendedName>
    <alternativeName>
        <fullName evidence="3">50S ribosomal protein L4</fullName>
    </alternativeName>
</protein>
<feature type="chain" id="PRO_1000052473" description="Large ribosomal subunit protein uL4">
    <location>
        <begin position="1"/>
        <end position="200"/>
    </location>
</feature>
<feature type="region of interest" description="Disordered" evidence="2">
    <location>
        <begin position="38"/>
        <end position="72"/>
    </location>
</feature>
<proteinExistence type="inferred from homology"/>
<organism>
    <name type="scientific">Pseudomonas putida (strain ATCC 700007 / DSM 6899 / JCM 31910 / BCRC 17059 / LMG 24140 / F1)</name>
    <dbReference type="NCBI Taxonomy" id="351746"/>
    <lineage>
        <taxon>Bacteria</taxon>
        <taxon>Pseudomonadati</taxon>
        <taxon>Pseudomonadota</taxon>
        <taxon>Gammaproteobacteria</taxon>
        <taxon>Pseudomonadales</taxon>
        <taxon>Pseudomonadaceae</taxon>
        <taxon>Pseudomonas</taxon>
    </lineage>
</organism>
<dbReference type="EMBL" id="CP000712">
    <property type="protein sequence ID" value="ABQ76658.1"/>
    <property type="molecule type" value="Genomic_DNA"/>
</dbReference>
<dbReference type="SMR" id="A5VXP8"/>
<dbReference type="KEGG" id="ppf:Pput_0488"/>
<dbReference type="eggNOG" id="COG0088">
    <property type="taxonomic scope" value="Bacteria"/>
</dbReference>
<dbReference type="HOGENOM" id="CLU_041575_5_2_6"/>
<dbReference type="GO" id="GO:1990904">
    <property type="term" value="C:ribonucleoprotein complex"/>
    <property type="evidence" value="ECO:0007669"/>
    <property type="project" value="UniProtKB-KW"/>
</dbReference>
<dbReference type="GO" id="GO:0005840">
    <property type="term" value="C:ribosome"/>
    <property type="evidence" value="ECO:0007669"/>
    <property type="project" value="UniProtKB-KW"/>
</dbReference>
<dbReference type="GO" id="GO:0019843">
    <property type="term" value="F:rRNA binding"/>
    <property type="evidence" value="ECO:0007669"/>
    <property type="project" value="UniProtKB-UniRule"/>
</dbReference>
<dbReference type="GO" id="GO:0003735">
    <property type="term" value="F:structural constituent of ribosome"/>
    <property type="evidence" value="ECO:0007669"/>
    <property type="project" value="InterPro"/>
</dbReference>
<dbReference type="GO" id="GO:0006412">
    <property type="term" value="P:translation"/>
    <property type="evidence" value="ECO:0007669"/>
    <property type="project" value="UniProtKB-UniRule"/>
</dbReference>
<dbReference type="FunFam" id="3.40.1370.10:FF:000001">
    <property type="entry name" value="50S ribosomal protein L4"/>
    <property type="match status" value="1"/>
</dbReference>
<dbReference type="Gene3D" id="3.40.1370.10">
    <property type="match status" value="1"/>
</dbReference>
<dbReference type="HAMAP" id="MF_01328_B">
    <property type="entry name" value="Ribosomal_uL4_B"/>
    <property type="match status" value="1"/>
</dbReference>
<dbReference type="InterPro" id="IPR002136">
    <property type="entry name" value="Ribosomal_uL4"/>
</dbReference>
<dbReference type="InterPro" id="IPR013005">
    <property type="entry name" value="Ribosomal_uL4-like"/>
</dbReference>
<dbReference type="InterPro" id="IPR023574">
    <property type="entry name" value="Ribosomal_uL4_dom_sf"/>
</dbReference>
<dbReference type="NCBIfam" id="TIGR03953">
    <property type="entry name" value="rplD_bact"/>
    <property type="match status" value="1"/>
</dbReference>
<dbReference type="PANTHER" id="PTHR10746">
    <property type="entry name" value="50S RIBOSOMAL PROTEIN L4"/>
    <property type="match status" value="1"/>
</dbReference>
<dbReference type="PANTHER" id="PTHR10746:SF6">
    <property type="entry name" value="LARGE RIBOSOMAL SUBUNIT PROTEIN UL4M"/>
    <property type="match status" value="1"/>
</dbReference>
<dbReference type="Pfam" id="PF00573">
    <property type="entry name" value="Ribosomal_L4"/>
    <property type="match status" value="1"/>
</dbReference>
<dbReference type="SUPFAM" id="SSF52166">
    <property type="entry name" value="Ribosomal protein L4"/>
    <property type="match status" value="1"/>
</dbReference>
<accession>A5VXP8</accession>
<gene>
    <name evidence="1" type="primary">rplD</name>
    <name type="ordered locus">Pput_0488</name>
</gene>